<organism>
    <name type="scientific">Pongo pygmaeus</name>
    <name type="common">Bornean orangutan</name>
    <dbReference type="NCBI Taxonomy" id="9600"/>
    <lineage>
        <taxon>Eukaryota</taxon>
        <taxon>Metazoa</taxon>
        <taxon>Chordata</taxon>
        <taxon>Craniata</taxon>
        <taxon>Vertebrata</taxon>
        <taxon>Euteleostomi</taxon>
        <taxon>Mammalia</taxon>
        <taxon>Eutheria</taxon>
        <taxon>Euarchontoglires</taxon>
        <taxon>Primates</taxon>
        <taxon>Haplorrhini</taxon>
        <taxon>Catarrhini</taxon>
        <taxon>Hominidae</taxon>
        <taxon>Pongo</taxon>
    </lineage>
</organism>
<dbReference type="EC" id="7.1.1.2" evidence="1"/>
<dbReference type="EMBL" id="D38115">
    <property type="protein sequence ID" value="BAA07311.1"/>
    <property type="molecule type" value="Genomic_DNA"/>
</dbReference>
<dbReference type="EMBL" id="V00675">
    <property type="protein sequence ID" value="CAA24045.1"/>
    <property type="status" value="ALT_INIT"/>
    <property type="molecule type" value="Genomic_DNA"/>
</dbReference>
<dbReference type="PIR" id="T14145">
    <property type="entry name" value="T14145"/>
</dbReference>
<dbReference type="RefSeq" id="NP_008235.1">
    <property type="nucleotide sequence ID" value="NC_001646.1"/>
</dbReference>
<dbReference type="SMR" id="P03918"/>
<dbReference type="GeneID" id="807906"/>
<dbReference type="KEGG" id="ppyg:807906"/>
<dbReference type="CTD" id="4540"/>
<dbReference type="GO" id="GO:0005743">
    <property type="term" value="C:mitochondrial inner membrane"/>
    <property type="evidence" value="ECO:0000250"/>
    <property type="project" value="UniProtKB"/>
</dbReference>
<dbReference type="GO" id="GO:0008137">
    <property type="term" value="F:NADH dehydrogenase (ubiquinone) activity"/>
    <property type="evidence" value="ECO:0000250"/>
    <property type="project" value="UniProtKB"/>
</dbReference>
<dbReference type="GO" id="GO:0015990">
    <property type="term" value="P:electron transport coupled proton transport"/>
    <property type="evidence" value="ECO:0007669"/>
    <property type="project" value="TreeGrafter"/>
</dbReference>
<dbReference type="GO" id="GO:0006120">
    <property type="term" value="P:mitochondrial electron transport, NADH to ubiquinone"/>
    <property type="evidence" value="ECO:0000250"/>
    <property type="project" value="UniProtKB"/>
</dbReference>
<dbReference type="GO" id="GO:0032981">
    <property type="term" value="P:mitochondrial respiratory chain complex I assembly"/>
    <property type="evidence" value="ECO:0000250"/>
    <property type="project" value="UniProtKB"/>
</dbReference>
<dbReference type="InterPro" id="IPR010934">
    <property type="entry name" value="NADH_DH_su5_C"/>
</dbReference>
<dbReference type="InterPro" id="IPR018393">
    <property type="entry name" value="NADHpl_OxRdtase_5_subgr"/>
</dbReference>
<dbReference type="InterPro" id="IPR001750">
    <property type="entry name" value="ND/Mrp_TM"/>
</dbReference>
<dbReference type="InterPro" id="IPR003945">
    <property type="entry name" value="NU5C-like"/>
</dbReference>
<dbReference type="InterPro" id="IPR001516">
    <property type="entry name" value="Proton_antipo_N"/>
</dbReference>
<dbReference type="NCBIfam" id="TIGR01974">
    <property type="entry name" value="NDH_I_L"/>
    <property type="match status" value="1"/>
</dbReference>
<dbReference type="PANTHER" id="PTHR42829">
    <property type="entry name" value="NADH-UBIQUINONE OXIDOREDUCTASE CHAIN 5"/>
    <property type="match status" value="1"/>
</dbReference>
<dbReference type="PANTHER" id="PTHR42829:SF2">
    <property type="entry name" value="NADH-UBIQUINONE OXIDOREDUCTASE CHAIN 5"/>
    <property type="match status" value="1"/>
</dbReference>
<dbReference type="Pfam" id="PF06455">
    <property type="entry name" value="NADH5_C"/>
    <property type="match status" value="1"/>
</dbReference>
<dbReference type="Pfam" id="PF00361">
    <property type="entry name" value="Proton_antipo_M"/>
    <property type="match status" value="1"/>
</dbReference>
<dbReference type="Pfam" id="PF00662">
    <property type="entry name" value="Proton_antipo_N"/>
    <property type="match status" value="1"/>
</dbReference>
<dbReference type="PRINTS" id="PR01434">
    <property type="entry name" value="NADHDHGNASE5"/>
</dbReference>
<accession>P03918</accession>
<accession>Q35586</accession>
<geneLocation type="mitochondrion"/>
<feature type="chain" id="PRO_0000118139" description="NADH-ubiquinone oxidoreductase chain 5">
    <location>
        <begin position="1"/>
        <end position="603"/>
    </location>
</feature>
<feature type="transmembrane region" description="Helical" evidence="3">
    <location>
        <begin position="4"/>
        <end position="24"/>
    </location>
</feature>
<feature type="transmembrane region" description="Helical" evidence="3">
    <location>
        <begin position="38"/>
        <end position="58"/>
    </location>
</feature>
<feature type="transmembrane region" description="Helical" evidence="3">
    <location>
        <begin position="89"/>
        <end position="109"/>
    </location>
</feature>
<feature type="transmembrane region" description="Helical" evidence="3">
    <location>
        <begin position="122"/>
        <end position="142"/>
    </location>
</feature>
<feature type="transmembrane region" description="Helical" evidence="3">
    <location>
        <begin position="171"/>
        <end position="191"/>
    </location>
</feature>
<feature type="transmembrane region" description="Helical" evidence="3">
    <location>
        <begin position="211"/>
        <end position="233"/>
    </location>
</feature>
<feature type="transmembrane region" description="Helical" evidence="3">
    <location>
        <begin position="241"/>
        <end position="261"/>
    </location>
</feature>
<feature type="transmembrane region" description="Helical" evidence="3">
    <location>
        <begin position="273"/>
        <end position="293"/>
    </location>
</feature>
<feature type="transmembrane region" description="Helical" evidence="3">
    <location>
        <begin position="301"/>
        <end position="320"/>
    </location>
</feature>
<feature type="transmembrane region" description="Helical" evidence="3">
    <location>
        <begin position="325"/>
        <end position="347"/>
    </location>
</feature>
<feature type="transmembrane region" description="Helical" evidence="3">
    <location>
        <begin position="366"/>
        <end position="386"/>
    </location>
</feature>
<feature type="transmembrane region" description="Helical" evidence="3">
    <location>
        <begin position="405"/>
        <end position="424"/>
    </location>
</feature>
<feature type="transmembrane region" description="Helical" evidence="3">
    <location>
        <begin position="457"/>
        <end position="477"/>
    </location>
</feature>
<feature type="transmembrane region" description="Helical" evidence="3">
    <location>
        <begin position="488"/>
        <end position="508"/>
    </location>
</feature>
<feature type="transmembrane region" description="Helical" evidence="3">
    <location>
        <begin position="537"/>
        <end position="557"/>
    </location>
</feature>
<feature type="transmembrane region" description="Helical" evidence="3">
    <location>
        <begin position="582"/>
        <end position="602"/>
    </location>
</feature>
<feature type="sequence conflict" description="In Ref. 2; CAA24045." evidence="4" ref="2">
    <original>S</original>
    <variation>P</variation>
    <location>
        <position position="31"/>
    </location>
</feature>
<feature type="sequence conflict" description="In Ref. 2; CAA24045." evidence="4" ref="2">
    <original>I</original>
    <variation>V</variation>
    <location>
        <position position="63"/>
    </location>
</feature>
<keyword id="KW-0249">Electron transport</keyword>
<keyword id="KW-0472">Membrane</keyword>
<keyword id="KW-0496">Mitochondrion</keyword>
<keyword id="KW-0999">Mitochondrion inner membrane</keyword>
<keyword id="KW-0520">NAD</keyword>
<keyword id="KW-0679">Respiratory chain</keyword>
<keyword id="KW-1278">Translocase</keyword>
<keyword id="KW-0812">Transmembrane</keyword>
<keyword id="KW-1133">Transmembrane helix</keyword>
<keyword id="KW-0813">Transport</keyword>
<keyword id="KW-0830">Ubiquinone</keyword>
<reference key="1">
    <citation type="journal article" date="1995" name="Proc. Natl. Acad. Sci. U.S.A.">
        <title>Recent African origin of modern humans revealed by complete sequences of hominoid mitochondrial DNAs.</title>
        <authorList>
            <person name="Horai S."/>
            <person name="Hayasaka K."/>
            <person name="Kondo R."/>
            <person name="Tsugane K."/>
            <person name="Takahata N."/>
        </authorList>
    </citation>
    <scope>NUCLEOTIDE SEQUENCE [GENOMIC DNA]</scope>
</reference>
<reference key="2">
    <citation type="journal article" date="1982" name="J. Mol. Evol.">
        <title>Mitochondrial DNA sequences of primates: tempo and mode of evolution.</title>
        <authorList>
            <person name="Brown W.M."/>
            <person name="Prager E.M."/>
            <person name="Wang A."/>
            <person name="Wilson A.C."/>
        </authorList>
    </citation>
    <scope>NUCLEOTIDE SEQUENCE [GENOMIC DNA] OF 1-77</scope>
</reference>
<name>NU5M_PONPY</name>
<gene>
    <name type="primary">MT-ND5</name>
    <name type="synonym">MTND5</name>
    <name type="synonym">NADH5</name>
    <name type="synonym">ND5</name>
</gene>
<sequence length="603" mass="66721">MAMFTTMTALTLTSLIPPITATLINPNKKNSYPHYVKTAIASAFTISLIPTTMFICLGQETIITNWCWTTTQTLQLSLSFKLDYFSMTFLPVALFVTWSIMEFSLWYMASDPNINQFFKYLLIFLITMIILITANNLLQLFIGWEGVGIMSFLLISWWYARTDANTAAIQAILYNRIGDIGFILTLAWFLLHSNSWELQQVFLLNNNPNLLPLLGLLLAAAGKSAQLGLHPWLPSAMEGPTPVSALLHSSTMVVAGIFLLIRFHPLMENNPPIQTLALCLGAITTLFAAICALTQNDIKKIVAFSTSSQLGLMMVTIGINQPHLAFLHICTHAFFKALLFMCSGSIIHNLNNEQDIRKMGGLLKTMPLTSTSLTISSLALAGMPFLSGFYSKDLIIETASMSYTNAWALSITLIATSLTSAYSTRMILHTLTGKPLLPTPISINENNPTLLNPIKRLMTGSLFTGFLITSNIPPTSLPQTTTPLYLKLAALTATLLGLLVALDLNYLANKLKVKTPPPAFYFSTMLGFYPNIIHRMIPHLSLLMSQNLSLLLLDLTWLEKLMPKAISQHQTSASTTISTQKGMIKLYFLSFLIPLLLTLLMIS</sequence>
<evidence type="ECO:0000250" key="1">
    <source>
        <dbReference type="UniProtKB" id="P03915"/>
    </source>
</evidence>
<evidence type="ECO:0000250" key="2">
    <source>
        <dbReference type="UniProtKB" id="P03920"/>
    </source>
</evidence>
<evidence type="ECO:0000255" key="3"/>
<evidence type="ECO:0000305" key="4"/>
<protein>
    <recommendedName>
        <fullName>NADH-ubiquinone oxidoreductase chain 5</fullName>
        <ecNumber evidence="1">7.1.1.2</ecNumber>
    </recommendedName>
    <alternativeName>
        <fullName>NADH dehydrogenase subunit 5</fullName>
    </alternativeName>
</protein>
<comment type="function">
    <text evidence="1">Core subunit of the mitochondrial membrane respiratory chain NADH dehydrogenase (Complex I) which catalyzes electron transfer from NADH through the respiratory chain, using ubiquinone as an electron acceptor. Essential for the catalytic activity and assembly of complex I.</text>
</comment>
<comment type="catalytic activity">
    <reaction evidence="1">
        <text>a ubiquinone + NADH + 5 H(+)(in) = a ubiquinol + NAD(+) + 4 H(+)(out)</text>
        <dbReference type="Rhea" id="RHEA:29091"/>
        <dbReference type="Rhea" id="RHEA-COMP:9565"/>
        <dbReference type="Rhea" id="RHEA-COMP:9566"/>
        <dbReference type="ChEBI" id="CHEBI:15378"/>
        <dbReference type="ChEBI" id="CHEBI:16389"/>
        <dbReference type="ChEBI" id="CHEBI:17976"/>
        <dbReference type="ChEBI" id="CHEBI:57540"/>
        <dbReference type="ChEBI" id="CHEBI:57945"/>
        <dbReference type="EC" id="7.1.1.2"/>
    </reaction>
</comment>
<comment type="subunit">
    <text evidence="2">Core subunit of respiratory chain NADH dehydrogenase (Complex I) which is composed of 45 different subunits.</text>
</comment>
<comment type="subcellular location">
    <subcellularLocation>
        <location evidence="2">Mitochondrion inner membrane</location>
        <topology evidence="3">Multi-pass membrane protein</topology>
    </subcellularLocation>
</comment>
<comment type="similarity">
    <text evidence="4">Belongs to the complex I subunit 5 family.</text>
</comment>
<comment type="sequence caution" evidence="4">
    <conflict type="erroneous initiation">
        <sequence resource="EMBL-CDS" id="CAA24045"/>
    </conflict>
</comment>
<proteinExistence type="inferred from homology"/>